<sequence>MMASYPEPEDAAGALLAPETGRTVKEPEGPPPSPGKGGGGGGGTAPEKPDPAQKPPYSYVALIAMAIRESAEKRLTLSGIYQYIIAKFPFYEKNKKGWQNSIRHNLSLNECFIKVPREGGGERKGNYWTLDPACEDMFEKGNYRRRRRMKRPFRPPPAHFQPGKGLFGAGGAAGGCGVAGAGADGYGYLAPPKYLQSGFLNNSWPLPQPPSPMPYASCQMAAAAAAAAAAAAAAGPGSPGAAAVVKGLAGPAASYGPYTRVQSMALPPGVVNSYNGLGGPPAAPPPPPHPHPHPHAHHLHAAAAPPPAPPHHGAAAPPPGQLSPASPATAAPPAPAPTSAPGLQFACARQPELAMMHCSYWDHDSKTGALHSRLDL</sequence>
<dbReference type="EMBL" id="AF301906">
    <property type="protein sequence ID" value="AAK01352.1"/>
    <property type="molecule type" value="mRNA"/>
</dbReference>
<dbReference type="EMBL" id="DQ016609">
    <property type="protein sequence ID" value="AAY21823.1"/>
    <property type="molecule type" value="Genomic_DNA"/>
</dbReference>
<dbReference type="EMBL" id="BC062549">
    <property type="protein sequence ID" value="AAH62549.1"/>
    <property type="molecule type" value="mRNA"/>
</dbReference>
<dbReference type="CCDS" id="CCDS3105.1"/>
<dbReference type="RefSeq" id="NP_075555.1">
    <property type="nucleotide sequence ID" value="NM_023067.4"/>
</dbReference>
<dbReference type="PDB" id="7VOU">
    <property type="method" value="X-ray"/>
    <property type="resolution" value="3.10 A"/>
    <property type="chains" value="C=46-148"/>
</dbReference>
<dbReference type="PDB" id="7VOV">
    <property type="method" value="X-ray"/>
    <property type="resolution" value="3.15 A"/>
    <property type="chains" value="A/B=52-145"/>
</dbReference>
<dbReference type="PDBsum" id="7VOU"/>
<dbReference type="PDBsum" id="7VOV"/>
<dbReference type="SMR" id="P58012"/>
<dbReference type="BioGRID" id="107136">
    <property type="interactions" value="67"/>
</dbReference>
<dbReference type="FunCoup" id="P58012">
    <property type="interactions" value="656"/>
</dbReference>
<dbReference type="IntAct" id="P58012">
    <property type="interactions" value="53"/>
</dbReference>
<dbReference type="MINT" id="P58012"/>
<dbReference type="STRING" id="9606.ENSP00000497217"/>
<dbReference type="GlyGen" id="P58012">
    <property type="glycosylation" value="3 sites, 1 O-linked glycan (1 site)"/>
</dbReference>
<dbReference type="iPTMnet" id="P58012"/>
<dbReference type="PhosphoSitePlus" id="P58012"/>
<dbReference type="BioMuta" id="FOXL2"/>
<dbReference type="DMDM" id="13626838"/>
<dbReference type="jPOST" id="P58012"/>
<dbReference type="MassIVE" id="P58012"/>
<dbReference type="PaxDb" id="9606-ENSP00000333188"/>
<dbReference type="PeptideAtlas" id="P58012"/>
<dbReference type="ProteomicsDB" id="57047"/>
<dbReference type="Pumba" id="P58012"/>
<dbReference type="Antibodypedia" id="17961">
    <property type="antibodies" value="401 antibodies from 36 providers"/>
</dbReference>
<dbReference type="DNASU" id="668"/>
<dbReference type="Ensembl" id="ENST00000648323.1">
    <property type="protein sequence ID" value="ENSP00000497217.1"/>
    <property type="gene ID" value="ENSG00000183770.7"/>
</dbReference>
<dbReference type="GeneID" id="668"/>
<dbReference type="KEGG" id="hsa:668"/>
<dbReference type="MANE-Select" id="ENST00000648323.1">
    <property type="protein sequence ID" value="ENSP00000497217.1"/>
    <property type="RefSeq nucleotide sequence ID" value="NM_023067.4"/>
    <property type="RefSeq protein sequence ID" value="NP_075555.1"/>
</dbReference>
<dbReference type="AGR" id="HGNC:1092"/>
<dbReference type="CTD" id="668"/>
<dbReference type="DisGeNET" id="668"/>
<dbReference type="GeneCards" id="FOXL2"/>
<dbReference type="GeneReviews" id="FOXL2"/>
<dbReference type="HGNC" id="HGNC:1092">
    <property type="gene designation" value="FOXL2"/>
</dbReference>
<dbReference type="HPA" id="ENSG00000183770">
    <property type="expression patterns" value="Tissue enhanced (cervix, ovary, parathyroid gland)"/>
</dbReference>
<dbReference type="MalaCards" id="FOXL2"/>
<dbReference type="MIM" id="110100">
    <property type="type" value="phenotype"/>
</dbReference>
<dbReference type="MIM" id="605597">
    <property type="type" value="gene"/>
</dbReference>
<dbReference type="MIM" id="608996">
    <property type="type" value="phenotype"/>
</dbReference>
<dbReference type="neXtProt" id="NX_P58012"/>
<dbReference type="OpenTargets" id="ENSG00000183770"/>
<dbReference type="Orphanet" id="572333">
    <property type="disease" value="Blepharophimosis-ptosis-epicanthus inversus syndrome plus"/>
</dbReference>
<dbReference type="Orphanet" id="572354">
    <property type="disease" value="Blepharophimosis-ptosis-epicanthus inversus syndrome type 1"/>
</dbReference>
<dbReference type="Orphanet" id="572361">
    <property type="disease" value="Blepharophimosis-ptosis-epicanthus inversus syndrome type 2"/>
</dbReference>
<dbReference type="Orphanet" id="99915">
    <property type="disease" value="Malignant granulosa cell tumor of the ovary"/>
</dbReference>
<dbReference type="PharmGKB" id="PA28235"/>
<dbReference type="VEuPathDB" id="HostDB:ENSG00000183770"/>
<dbReference type="eggNOG" id="KOG2294">
    <property type="taxonomic scope" value="Eukaryota"/>
</dbReference>
<dbReference type="GeneTree" id="ENSGT00940000162075"/>
<dbReference type="HOGENOM" id="CLU_023357_1_0_1"/>
<dbReference type="InParanoid" id="P58012"/>
<dbReference type="OMA" id="CSYWEHE"/>
<dbReference type="OrthoDB" id="6230630at2759"/>
<dbReference type="PAN-GO" id="P58012">
    <property type="GO annotations" value="5 GO annotations based on evolutionary models"/>
</dbReference>
<dbReference type="PhylomeDB" id="P58012"/>
<dbReference type="TreeFam" id="TF316127"/>
<dbReference type="PathwayCommons" id="P58012"/>
<dbReference type="Reactome" id="R-HSA-3232118">
    <property type="pathway name" value="SUMOylation of transcription factors"/>
</dbReference>
<dbReference type="SignaLink" id="P58012"/>
<dbReference type="SIGNOR" id="P58012"/>
<dbReference type="BioGRID-ORCS" id="668">
    <property type="hits" value="124 hits in 1183 CRISPR screens"/>
</dbReference>
<dbReference type="GeneWiki" id="Forkhead_box_L2"/>
<dbReference type="GenomeRNAi" id="668"/>
<dbReference type="Pharos" id="P58012">
    <property type="development level" value="Tbio"/>
</dbReference>
<dbReference type="PRO" id="PR:P58012"/>
<dbReference type="Proteomes" id="UP000005640">
    <property type="component" value="Chromosome 3"/>
</dbReference>
<dbReference type="RNAct" id="P58012">
    <property type="molecule type" value="protein"/>
</dbReference>
<dbReference type="Bgee" id="ENSG00000183770">
    <property type="expression patterns" value="Expressed in left ovary and 58 other cell types or tissues"/>
</dbReference>
<dbReference type="ExpressionAtlas" id="P58012">
    <property type="expression patterns" value="baseline and differential"/>
</dbReference>
<dbReference type="GO" id="GO:0000785">
    <property type="term" value="C:chromatin"/>
    <property type="evidence" value="ECO:0000247"/>
    <property type="project" value="NTNU_SB"/>
</dbReference>
<dbReference type="GO" id="GO:0090543">
    <property type="term" value="C:Flemming body"/>
    <property type="evidence" value="ECO:0000314"/>
    <property type="project" value="HPA"/>
</dbReference>
<dbReference type="GO" id="GO:0005654">
    <property type="term" value="C:nucleoplasm"/>
    <property type="evidence" value="ECO:0000314"/>
    <property type="project" value="HPA"/>
</dbReference>
<dbReference type="GO" id="GO:0005634">
    <property type="term" value="C:nucleus"/>
    <property type="evidence" value="ECO:0000314"/>
    <property type="project" value="UniProtKB"/>
</dbReference>
<dbReference type="GO" id="GO:0043028">
    <property type="term" value="F:cysteine-type endopeptidase regulator activity involved in apoptotic process"/>
    <property type="evidence" value="ECO:0000315"/>
    <property type="project" value="UniProtKB"/>
</dbReference>
<dbReference type="GO" id="GO:0003677">
    <property type="term" value="F:DNA binding"/>
    <property type="evidence" value="ECO:0000314"/>
    <property type="project" value="UniProtKB"/>
</dbReference>
<dbReference type="GO" id="GO:0001228">
    <property type="term" value="F:DNA-binding transcription activator activity, RNA polymerase II-specific"/>
    <property type="evidence" value="ECO:0007669"/>
    <property type="project" value="Ensembl"/>
</dbReference>
<dbReference type="GO" id="GO:0003700">
    <property type="term" value="F:DNA-binding transcription factor activity"/>
    <property type="evidence" value="ECO:0000250"/>
    <property type="project" value="UniProtKB"/>
</dbReference>
<dbReference type="GO" id="GO:0000981">
    <property type="term" value="F:DNA-binding transcription factor activity, RNA polymerase II-specific"/>
    <property type="evidence" value="ECO:0000247"/>
    <property type="project" value="NTNU_SB"/>
</dbReference>
<dbReference type="GO" id="GO:0030331">
    <property type="term" value="F:nuclear estrogen receptor binding"/>
    <property type="evidence" value="ECO:0007669"/>
    <property type="project" value="Ensembl"/>
</dbReference>
<dbReference type="GO" id="GO:0000978">
    <property type="term" value="F:RNA polymerase II cis-regulatory region sequence-specific DNA binding"/>
    <property type="evidence" value="ECO:0000318"/>
    <property type="project" value="GO_Central"/>
</dbReference>
<dbReference type="GO" id="GO:1990837">
    <property type="term" value="F:sequence-specific double-stranded DNA binding"/>
    <property type="evidence" value="ECO:0000314"/>
    <property type="project" value="ARUK-UCL"/>
</dbReference>
<dbReference type="GO" id="GO:0031624">
    <property type="term" value="F:ubiquitin conjugating enzyme binding"/>
    <property type="evidence" value="ECO:0000353"/>
    <property type="project" value="UniProtKB"/>
</dbReference>
<dbReference type="GO" id="GO:0009653">
    <property type="term" value="P:anatomical structure morphogenesis"/>
    <property type="evidence" value="ECO:0000318"/>
    <property type="project" value="GO_Central"/>
</dbReference>
<dbReference type="GO" id="GO:0006309">
    <property type="term" value="P:apoptotic DNA fragmentation"/>
    <property type="evidence" value="ECO:0000315"/>
    <property type="project" value="UniProtKB"/>
</dbReference>
<dbReference type="GO" id="GO:0030154">
    <property type="term" value="P:cell differentiation"/>
    <property type="evidence" value="ECO:0000318"/>
    <property type="project" value="GO_Central"/>
</dbReference>
<dbReference type="GO" id="GO:0048048">
    <property type="term" value="P:embryonic eye morphogenesis"/>
    <property type="evidence" value="ECO:0007669"/>
    <property type="project" value="Ensembl"/>
</dbReference>
<dbReference type="GO" id="GO:0002074">
    <property type="term" value="P:extraocular skeletal muscle development"/>
    <property type="evidence" value="ECO:0000315"/>
    <property type="project" value="UniProtKB"/>
</dbReference>
<dbReference type="GO" id="GO:0019101">
    <property type="term" value="P:female somatic sex determination"/>
    <property type="evidence" value="ECO:0007669"/>
    <property type="project" value="Ensembl"/>
</dbReference>
<dbReference type="GO" id="GO:0060014">
    <property type="term" value="P:granulosa cell differentiation"/>
    <property type="evidence" value="ECO:0007669"/>
    <property type="project" value="Ensembl"/>
</dbReference>
<dbReference type="GO" id="GO:0045892">
    <property type="term" value="P:negative regulation of DNA-templated transcription"/>
    <property type="evidence" value="ECO:0000314"/>
    <property type="project" value="UniProtKB"/>
</dbReference>
<dbReference type="GO" id="GO:0000122">
    <property type="term" value="P:negative regulation of transcription by RNA polymerase II"/>
    <property type="evidence" value="ECO:0007669"/>
    <property type="project" value="Ensembl"/>
</dbReference>
<dbReference type="GO" id="GO:0001555">
    <property type="term" value="P:oocyte growth"/>
    <property type="evidence" value="ECO:0007669"/>
    <property type="project" value="Ensembl"/>
</dbReference>
<dbReference type="GO" id="GO:0001541">
    <property type="term" value="P:ovarian follicle development"/>
    <property type="evidence" value="ECO:0000315"/>
    <property type="project" value="UniProtKB"/>
</dbReference>
<dbReference type="GO" id="GO:0043065">
    <property type="term" value="P:positive regulation of apoptotic process"/>
    <property type="evidence" value="ECO:0000315"/>
    <property type="project" value="UniProtKB"/>
</dbReference>
<dbReference type="GO" id="GO:0045893">
    <property type="term" value="P:positive regulation of DNA-templated transcription"/>
    <property type="evidence" value="ECO:0000250"/>
    <property type="project" value="UniProtKB"/>
</dbReference>
<dbReference type="GO" id="GO:0046881">
    <property type="term" value="P:positive regulation of follicle-stimulating hormone secretion"/>
    <property type="evidence" value="ECO:0007669"/>
    <property type="project" value="Ensembl"/>
</dbReference>
<dbReference type="GO" id="GO:0033686">
    <property type="term" value="P:positive regulation of luteinizing hormone secretion"/>
    <property type="evidence" value="ECO:0007669"/>
    <property type="project" value="Ensembl"/>
</dbReference>
<dbReference type="GO" id="GO:0006357">
    <property type="term" value="P:regulation of transcription by RNA polymerase II"/>
    <property type="evidence" value="ECO:0000318"/>
    <property type="project" value="GO_Central"/>
</dbReference>
<dbReference type="GO" id="GO:0007338">
    <property type="term" value="P:single fertilization"/>
    <property type="evidence" value="ECO:0007669"/>
    <property type="project" value="Ensembl"/>
</dbReference>
<dbReference type="GO" id="GO:0060065">
    <property type="term" value="P:uterus development"/>
    <property type="evidence" value="ECO:0007669"/>
    <property type="project" value="Ensembl"/>
</dbReference>
<dbReference type="CDD" id="cd20028">
    <property type="entry name" value="FH_FOXL2"/>
    <property type="match status" value="1"/>
</dbReference>
<dbReference type="FunFam" id="1.10.10.10:FF:000016">
    <property type="entry name" value="Forkhead box protein I1"/>
    <property type="match status" value="1"/>
</dbReference>
<dbReference type="Gene3D" id="1.10.10.10">
    <property type="entry name" value="Winged helix-like DNA-binding domain superfamily/Winged helix DNA-binding domain"/>
    <property type="match status" value="1"/>
</dbReference>
<dbReference type="InterPro" id="IPR047515">
    <property type="entry name" value="FH_FOXL2"/>
</dbReference>
<dbReference type="InterPro" id="IPR001766">
    <property type="entry name" value="Fork_head_dom"/>
</dbReference>
<dbReference type="InterPro" id="IPR050211">
    <property type="entry name" value="FOX_domain-containing"/>
</dbReference>
<dbReference type="InterPro" id="IPR018122">
    <property type="entry name" value="TF_fork_head_CS_1"/>
</dbReference>
<dbReference type="InterPro" id="IPR030456">
    <property type="entry name" value="TF_fork_head_CS_2"/>
</dbReference>
<dbReference type="InterPro" id="IPR036388">
    <property type="entry name" value="WH-like_DNA-bd_sf"/>
</dbReference>
<dbReference type="InterPro" id="IPR036390">
    <property type="entry name" value="WH_DNA-bd_sf"/>
</dbReference>
<dbReference type="PANTHER" id="PTHR11829">
    <property type="entry name" value="FORKHEAD BOX PROTEIN"/>
    <property type="match status" value="1"/>
</dbReference>
<dbReference type="PANTHER" id="PTHR11829:SF411">
    <property type="entry name" value="FORKHEAD BOX PROTEIN L2"/>
    <property type="match status" value="1"/>
</dbReference>
<dbReference type="Pfam" id="PF00250">
    <property type="entry name" value="Forkhead"/>
    <property type="match status" value="1"/>
</dbReference>
<dbReference type="PRINTS" id="PR00053">
    <property type="entry name" value="FORKHEAD"/>
</dbReference>
<dbReference type="SMART" id="SM00339">
    <property type="entry name" value="FH"/>
    <property type="match status" value="1"/>
</dbReference>
<dbReference type="SUPFAM" id="SSF46785">
    <property type="entry name" value="Winged helix' DNA-binding domain"/>
    <property type="match status" value="1"/>
</dbReference>
<dbReference type="PROSITE" id="PS00657">
    <property type="entry name" value="FORK_HEAD_1"/>
    <property type="match status" value="1"/>
</dbReference>
<dbReference type="PROSITE" id="PS00658">
    <property type="entry name" value="FORK_HEAD_2"/>
    <property type="match status" value="1"/>
</dbReference>
<dbReference type="PROSITE" id="PS50039">
    <property type="entry name" value="FORK_HEAD_3"/>
    <property type="match status" value="1"/>
</dbReference>
<organism>
    <name type="scientific">Homo sapiens</name>
    <name type="common">Human</name>
    <dbReference type="NCBI Taxonomy" id="9606"/>
    <lineage>
        <taxon>Eukaryota</taxon>
        <taxon>Metazoa</taxon>
        <taxon>Chordata</taxon>
        <taxon>Craniata</taxon>
        <taxon>Vertebrata</taxon>
        <taxon>Euteleostomi</taxon>
        <taxon>Mammalia</taxon>
        <taxon>Eutheria</taxon>
        <taxon>Euarchontoglires</taxon>
        <taxon>Primates</taxon>
        <taxon>Haplorrhini</taxon>
        <taxon>Catarrhini</taxon>
        <taxon>Hominidae</taxon>
        <taxon>Homo</taxon>
    </lineage>
</organism>
<keyword id="KW-0002">3D-structure</keyword>
<keyword id="KW-0221">Differentiation</keyword>
<keyword id="KW-0225">Disease variant</keyword>
<keyword id="KW-0238">DNA-binding</keyword>
<keyword id="KW-1017">Isopeptide bond</keyword>
<keyword id="KW-0539">Nucleus</keyword>
<keyword id="KW-0597">Phosphoprotein</keyword>
<keyword id="KW-1066">Premature ovarian failure</keyword>
<keyword id="KW-1267">Proteomics identification</keyword>
<keyword id="KW-1185">Reference proteome</keyword>
<keyword id="KW-0804">Transcription</keyword>
<keyword id="KW-0805">Transcription regulation</keyword>
<keyword id="KW-0818">Triplet repeat expansion</keyword>
<keyword id="KW-0832">Ubl conjugation</keyword>
<evidence type="ECO:0000250" key="1"/>
<evidence type="ECO:0000255" key="2">
    <source>
        <dbReference type="PROSITE-ProRule" id="PRU00089"/>
    </source>
</evidence>
<evidence type="ECO:0000256" key="3">
    <source>
        <dbReference type="SAM" id="MobiDB-lite"/>
    </source>
</evidence>
<evidence type="ECO:0000269" key="4">
    <source>
    </source>
</evidence>
<evidence type="ECO:0000269" key="5">
    <source>
    </source>
</evidence>
<evidence type="ECO:0000269" key="6">
    <source>
    </source>
</evidence>
<evidence type="ECO:0000269" key="7">
    <source>
    </source>
</evidence>
<evidence type="ECO:0000269" key="8">
    <source>
    </source>
</evidence>
<evidence type="ECO:0000269" key="9">
    <source>
    </source>
</evidence>
<evidence type="ECO:0000269" key="10">
    <source>
    </source>
</evidence>
<evidence type="ECO:0000269" key="11">
    <source>
    </source>
</evidence>
<evidence type="ECO:0000269" key="12">
    <source>
    </source>
</evidence>
<evidence type="ECO:0000269" key="13">
    <source>
    </source>
</evidence>
<evidence type="ECO:0000269" key="14">
    <source>
    </source>
</evidence>
<evidence type="ECO:0000269" key="15">
    <source>
    </source>
</evidence>
<evidence type="ECO:0000269" key="16">
    <source>
    </source>
</evidence>
<evidence type="ECO:0000269" key="17">
    <source>
    </source>
</evidence>
<evidence type="ECO:0000269" key="18">
    <source>
    </source>
</evidence>
<evidence type="ECO:0000269" key="19">
    <source>
    </source>
</evidence>
<evidence type="ECO:0000269" key="20">
    <source>
    </source>
</evidence>
<evidence type="ECO:0000269" key="21">
    <source>
    </source>
</evidence>
<evidence type="ECO:0000269" key="22">
    <source>
    </source>
</evidence>
<evidence type="ECO:0000269" key="23">
    <source>
    </source>
</evidence>
<evidence type="ECO:0000269" key="24">
    <source>
    </source>
</evidence>
<evidence type="ECO:0000269" key="25">
    <source>
    </source>
</evidence>
<evidence type="ECO:0000269" key="26">
    <source ref="2"/>
</evidence>
<evidence type="ECO:0007744" key="27">
    <source>
    </source>
</evidence>
<evidence type="ECO:0007829" key="28">
    <source>
        <dbReference type="PDB" id="7VOU"/>
    </source>
</evidence>
<comment type="function">
    <text evidence="1 13 19 20 22">Transcriptional regulator. Critical factor essential for ovary differentiation and maintenance, and repression of the genetic program for somatic testis determination. Prevents trans-differentiation of ovary to testis through transcriptional repression of the Sertoli cell-promoting gene SOX9 (By similarity). Has apoptotic activity in ovarian cells. Suppresses ESR1-mediated transcription of PTGS2/COX2 stimulated by tamoxifen (By similarity). Is a regulator of CYP19 expression (By similarity). Participates in SMAD3-dependent transcription of FST via the intronic SMAD-binding element (By similarity). Is a transcriptional repressor of STAR. Activates SIRT1 transcription under cellular stress conditions. Activates transcription of OSR2.</text>
</comment>
<comment type="subunit">
    <text evidence="1 13 22">Interacts with ESR1 (By similarity). Interacts with SMAD3 (By similarity). Interacts with DDX20. Interacts with UBE2I/UBC9.</text>
</comment>
<comment type="subcellular location">
    <subcellularLocation>
        <location evidence="2 22">Nucleus</location>
    </subcellularLocation>
</comment>
<comment type="tissue specificity">
    <text>In addition to its expression in the developing eyelid, it is transcribed very early in somatic cells of the developing gonad (before sex determination) and its expression persists in the follicular cells of the adult ovary.</text>
</comment>
<comment type="induction">
    <text evidence="19">In granulosa-like cells, up-regulated at transcript and protein levels under oxidative stress and heat-shock conditions. Down-regulated by SIRT1.</text>
</comment>
<comment type="PTM">
    <text evidence="22">Sumoylated with SUMO1; sumoylation is required for transcriptional repression activity.</text>
</comment>
<comment type="disease" evidence="4 5 8 9 10 11 12 14 15 16 17 18 24 26">
    <disease id="DI-01287">
        <name>Blepharophimosis, ptosis, and epicanthus inversus syndrome</name>
        <acronym>BPES</acronym>
        <description>A disorder characterized by eyelid dysplasia, small palpebral fissures, drooping eyelids and a skin fold curving in the mediolateral direction, inferior to the inner canthus. In type I BPSE (BPES1) eyelid abnormalities are associated with female infertility. Affected females show an ovarian deficit due to primary amenorrhea or to premature ovarian failure (POF). In type II BPSE (BPES2) affected individuals show only the eyelid defects.</description>
        <dbReference type="MIM" id="110100"/>
    </disease>
    <text>The disease is caused by variants affecting the gene represented in this entry. There is a mutational hotspot in the region coding for the poly-Ala domain, since 30% of all mutations in the ORF lead to poly-Ala expansions, resulting mainly in BPES type II.</text>
</comment>
<comment type="disease" evidence="6 20">
    <disease id="DI-02193">
        <name>Premature ovarian failure 3</name>
        <acronym>POF3</acronym>
        <description>An ovarian disorder defined as the cessation of ovarian function under the age of 40 years. It is characterized by oligomenorrhea or amenorrhea, in the presence of elevated levels of serum gonadotropins and low estradiol.</description>
        <dbReference type="MIM" id="608996"/>
    </disease>
    <text>The disease is caused by variants affecting the gene represented in this entry.</text>
</comment>
<comment type="online information" name="Forkhead box L2 (FOXL2)">
    <link uri="https://lovd.cmgg.be/index.php?select_db=FOXL2"/>
    <text>Leiden Open Variation Database (LOVD)</text>
</comment>
<reference key="1">
    <citation type="journal article" date="2001" name="Nat. Genet.">
        <title>The putative forkhead transcription factor FOXL2 is mutated in blepharophimosis/ptosis/epicanthus inversus syndrome.</title>
        <authorList>
            <person name="Crisponi L."/>
            <person name="Deiana M."/>
            <person name="Loi A."/>
            <person name="Chiappe F."/>
            <person name="Uda M."/>
            <person name="Amati P."/>
            <person name="Bisceglia L."/>
            <person name="Zelante L."/>
            <person name="Nagaraja R."/>
            <person name="Porcu S."/>
            <person name="Ristaldi M.S."/>
            <person name="Marzella R."/>
            <person name="Rocchi M."/>
            <person name="Nicolino M."/>
            <person name="Lienhardt-Roussie A."/>
            <person name="Nivelon A."/>
            <person name="Verloes A."/>
            <person name="Schlessinger D."/>
            <person name="Gasparini P."/>
            <person name="Bonneau D."/>
            <person name="Cao A."/>
            <person name="Pilia G."/>
        </authorList>
    </citation>
    <scope>NUCLEOTIDE SEQUENCE [MRNA]</scope>
    <scope>VARIANT BPES ALA-ALA-ALA-ALA-ALA-ALA-ALA-ALA-ALA-ALA-234 INS</scope>
</reference>
<reference key="2">
    <citation type="submission" date="2005-03" db="EMBL/GenBank/DDBJ databases">
        <title>Study of mutations of FOXL2 gene in a Chinese TongHai family with blepharophimosis-ptosis-epicanthus inversus syndrome.</title>
        <authorList>
            <person name="Xu Y."/>
        </authorList>
    </citation>
    <scope>NUCLEOTIDE SEQUENCE [GENOMIC DNA]</scope>
    <scope>VARIANT BPES ALA-ALA-ALA-ALA-ALA-ALA-ALA-ALA-ALA-ALA-ALA-234 INS</scope>
</reference>
<reference key="3">
    <citation type="journal article" date="2004" name="Genome Res.">
        <title>The status, quality, and expansion of the NIH full-length cDNA project: the Mammalian Gene Collection (MGC).</title>
        <authorList>
            <consortium name="The MGC Project Team"/>
        </authorList>
    </citation>
    <scope>NUCLEOTIDE SEQUENCE [LARGE SCALE MRNA]</scope>
    <source>
        <tissue>Pancreas</tissue>
    </source>
</reference>
<reference key="4">
    <citation type="journal article" date="2005" name="Biochem. Biophys. Res. Commun.">
        <title>Transcriptional factor FOXL2 interacts with DP103 and induces apoptosis.</title>
        <authorList>
            <person name="Lee K."/>
            <person name="Pisarska M.D."/>
            <person name="Ko J.J."/>
            <person name="Kang Y."/>
            <person name="Yoon S."/>
            <person name="Ryou S.M."/>
            <person name="Cha K.Y."/>
            <person name="Bae J."/>
        </authorList>
    </citation>
    <scope>FUNCTION IN APOPTOSIS</scope>
    <scope>INTERACTION WITH DDX20</scope>
</reference>
<reference key="5">
    <citation type="journal article" date="2009" name="Cell. Signal.">
        <title>Sumoylation of forkhead L2 by Ubc9 is required for its activity as a transcriptional repressor of the steroidogenic acute regulatory gene.</title>
        <authorList>
            <person name="Kuo F.T."/>
            <person name="Bentsi-Barnes I.K."/>
            <person name="Barlow G.M."/>
            <person name="Bae J."/>
            <person name="Pisarska M.D."/>
        </authorList>
    </citation>
    <scope>FUNCTION AS TRANSCRIPTIONAL REPRESSOR OF STAR</scope>
    <scope>INTERACTION WITH UBE2I</scope>
    <scope>SUMOYLATION AT LYS-25</scope>
    <scope>SUBCELLULAR LOCATION</scope>
    <scope>MUTAGENESIS OF LYS-25</scope>
</reference>
<reference key="6">
    <citation type="journal article" date="2009" name="Hum. Mol. Genet.">
        <title>Positive and negative feedback regulates the transcription factor FOXL2 in response to cell stress: evidence for a regulatory imbalance induced by disease-causing mutations.</title>
        <authorList>
            <person name="Benayoun B.A."/>
            <person name="Batista F."/>
            <person name="Auer J."/>
            <person name="Dipietromaria A."/>
            <person name="L'Hote D."/>
            <person name="De Baere E."/>
            <person name="Veitia R.A."/>
        </authorList>
    </citation>
    <scope>FUNCTION AS TRANSCRIPTIONAL ACTIVATOR OF SIRT1</scope>
    <scope>INDUCTION</scope>
</reference>
<reference key="7">
    <citation type="journal article" date="2009" name="J. Med. Genet.">
        <title>Functional evidence implicating FOXL2 in non-syndromic premature ovarian failure and in the regulation of the transcription factor OSR2.</title>
        <authorList>
            <person name="Laissue P."/>
            <person name="Lakhal B."/>
            <person name="Benayoun B.A."/>
            <person name="Dipietromaria A."/>
            <person name="Braham R."/>
            <person name="Elghezal H."/>
            <person name="Philibert P."/>
            <person name="Saad A."/>
            <person name="Sultan C."/>
            <person name="Fellous M."/>
            <person name="Veitia R.A."/>
        </authorList>
    </citation>
    <scope>FUNCTION AS TRANSCRIPTIONAL ACTIVATOR OF OSR2</scope>
    <scope>VARIANT POF3 ASP-187</scope>
    <scope>CHARACTERIZATION OF VARIANT POF3 ASP-187</scope>
</reference>
<reference key="8">
    <citation type="journal article" date="2013" name="J. Proteome Res.">
        <title>Toward a comprehensive characterization of a human cancer cell phosphoproteome.</title>
        <authorList>
            <person name="Zhou H."/>
            <person name="Di Palma S."/>
            <person name="Preisinger C."/>
            <person name="Peng M."/>
            <person name="Polat A.N."/>
            <person name="Heck A.J."/>
            <person name="Mohammed S."/>
        </authorList>
    </citation>
    <scope>PHOSPHORYLATION [LARGE SCALE ANALYSIS] AT SER-33</scope>
    <scope>IDENTIFICATION BY MASS SPECTROMETRY [LARGE SCALE ANALYSIS]</scope>
    <source>
        <tissue>Cervix carcinoma</tissue>
        <tissue>Erythroleukemia</tissue>
    </source>
</reference>
<reference key="9">
    <citation type="journal article" date="2004" name="Hum. Mutat.">
        <title>The human FOXL2 mutation database.</title>
        <authorList>
            <person name="Beysen D."/>
            <person name="Vandesompele J."/>
            <person name="Messiaen L."/>
            <person name="De Paepe A."/>
            <person name="De Baere E."/>
        </authorList>
    </citation>
    <scope>DATABASE OF FOXL2 VARIANTS</scope>
</reference>
<reference key="10">
    <citation type="journal article" date="2001" name="Hum. Mol. Genet.">
        <title>Spectrum of FOXL2 gene mutations in blepharophimosis-ptosis-epicanthus inversus (BPES) families demonstrates a genotype -- phenotype correlation.</title>
        <authorList>
            <person name="De Baere E."/>
            <person name="Dixon M.J."/>
            <person name="Small K.W."/>
            <person name="Jabs E.W."/>
            <person name="Leroy B.P."/>
            <person name="Devriendt K."/>
            <person name="Gillerot Y."/>
            <person name="Mortier G."/>
            <person name="Meire F."/>
            <person name="Van Maldergem L."/>
            <person name="Courtens W."/>
            <person name="Hjalgrim H."/>
            <person name="Huang S."/>
            <person name="Liebaers I."/>
            <person name="Van Regemorter N."/>
            <person name="Touraine P."/>
            <person name="Praphanphoj V."/>
            <person name="Verloes A."/>
            <person name="Udar N."/>
            <person name="Yellore V."/>
            <person name="Chalukya M."/>
            <person name="Yelchits S."/>
            <person name="De Paepe A."/>
            <person name="Kuttenn F."/>
            <person name="Fellous M."/>
            <person name="Veitia R."/>
            <person name="Messiaen L."/>
        </authorList>
    </citation>
    <scope>VARIANTS BPES ILE-85 DEL AND PHE-217</scope>
</reference>
<reference key="11">
    <citation type="journal article" date="2002" name="Am. J. Med. Genet.">
        <title>Mutations in FOXL2 underlying BPES (types 1 and 2) in Colombian families.</title>
        <authorList>
            <person name="Ramirez-Castro J.L."/>
            <person name="Pineda-Trujillo N."/>
            <person name="Valencia A.V."/>
            <person name="Muneton C.M."/>
            <person name="Botero O."/>
            <person name="Trujillo O."/>
            <person name="Vasquez G."/>
            <person name="Mora B.E."/>
            <person name="Durango N."/>
            <person name="Bedoya G."/>
            <person name="Ruiz-Linares A."/>
        </authorList>
    </citation>
    <scope>VARIANT BPES ALA-ALA-ALA-ALA-ALA-ALA-ALA-ALA-ALA-ALA-234 INS</scope>
</reference>
<reference key="12">
    <citation type="journal article" date="2002" name="J. Med. Genet.">
        <title>FOXL2 mutation screening in a large panel of POF patients and XX males.</title>
        <authorList>
            <person name="De Baere E."/>
            <person name="Lemercier B."/>
            <person name="Christin-Maitre S."/>
            <person name="Durval D."/>
            <person name="Messiaen L."/>
            <person name="Fellous M."/>
            <person name="Veitia R."/>
        </authorList>
    </citation>
    <scope>VARIANTS ASP-187 AND SER-285</scope>
</reference>
<reference key="13">
    <citation type="journal article" date="2002" name="Mol. Hum. Reprod.">
        <title>Identification of novel mutations in FOXL2 associated with premature ovarian failure.</title>
        <authorList>
            <person name="Harris S.E."/>
            <person name="Chand A.L."/>
            <person name="Winship I.M."/>
            <person name="Gersak K."/>
            <person name="Aittomaeki K."/>
            <person name="Shelling A.N."/>
        </authorList>
    </citation>
    <scope>VARIANTS POF3 221-ALA--ALA-230 DEL AND ASN-258</scope>
    <scope>VARIANT GLY-179</scope>
</reference>
<reference key="14">
    <citation type="journal article" date="2003" name="Am. J. Hum. Genet.">
        <title>FOXL2 and BPES: mutational hotspots, phenotypic variability, and revision of the genotype-phenotype correlation.</title>
        <authorList>
            <person name="De Baere E."/>
            <person name="Beysen D."/>
            <person name="Oley C."/>
            <person name="Lorenz B."/>
            <person name="Cocquet J."/>
            <person name="De Sutter P."/>
            <person name="Devriendt K."/>
            <person name="Dixon M.J."/>
            <person name="Fellous M."/>
            <person name="Fryns J.-P."/>
            <person name="Garza A."/>
            <person name="Jonsrud C."/>
            <person name="Koivisto P.A."/>
            <person name="Krause A."/>
            <person name="Leroy B.P."/>
            <person name="Meire F."/>
            <person name="Plomp A."/>
            <person name="Van Maldergem L."/>
            <person name="De Paepe A."/>
            <person name="Veitia R."/>
            <person name="Messiaen L."/>
        </authorList>
    </citation>
    <scope>VARIANTS BPES PHE-106; LYS-109 AND PHE-217</scope>
</reference>
<reference key="15">
    <citation type="journal article" date="2003" name="Clin. Genet.">
        <title>Sporadic and familial blepharophimosis -ptosis-epicanthus inversus syndrome: FOXL2 mutation screen and MRI study of the superior levator eyelid muscle.</title>
        <authorList>
            <person name="Dollfus H."/>
            <person name="Stoetzel C."/>
            <person name="Riehm S."/>
            <person name="Lahlou Boukoffa W."/>
            <person name="Bediard Boulaneb F."/>
            <person name="Quillet R."/>
            <person name="Abu-Eid M."/>
            <person name="Speeg-Schatz C."/>
            <person name="Francfort J.J."/>
            <person name="Flament J."/>
            <person name="Veillon F."/>
            <person name="Perrin-Schmitt F."/>
        </authorList>
    </citation>
    <scope>VARIANT BPES SER-84</scope>
</reference>
<reference key="16">
    <citation type="journal article" date="2003" name="Hum. Mutat.">
        <title>Comparative analysis of the FOXL2 gene and characterization of mutations in BPES patients.</title>
        <authorList>
            <person name="Udar N."/>
            <person name="Yellore V."/>
            <person name="Chalukya M."/>
            <person name="Yelchits S."/>
            <person name="Silva-Garcia R."/>
            <person name="Small K."/>
        </authorList>
    </citation>
    <scope>VARIANT BPES ARG-104</scope>
</reference>
<reference key="17">
    <citation type="journal article" date="2004" name="Mol. Vis.">
        <title>Genetic analysis of a five generation Indian family with BPES: a novel missense mutation (p.Y215C).</title>
        <authorList>
            <person name="Kumar A."/>
            <person name="Babu M."/>
            <person name="Raghunath A."/>
            <person name="Venkatesh C.P."/>
        </authorList>
    </citation>
    <scope>VARIANT BPES CYS-215</scope>
</reference>
<reference key="18">
    <citation type="journal article" date="2006" name="Chin. Med. J.">
        <title>Three novel FOXL2 gene mutations in Chinese patients with blepharophimosis-ptosis-epicanthus inversus syndrome.</title>
        <authorList>
            <person name="Or S.F."/>
            <person name="Tong M.F."/>
            <person name="Lo F.M."/>
            <person name="Lam T.S."/>
        </authorList>
    </citation>
    <scope>VARIANT BPES THR-63</scope>
</reference>
<reference key="19">
    <citation type="journal article" date="2007" name="Hum. Genet.">
        <title>A novel polyalanine expansion in FOXL2: the first evidence for a recessive form of the blepharophimosis syndrome (BPES) associated with ovarian dysfunction.</title>
        <authorList>
            <person name="Nallathambi J."/>
            <person name="Moumne L."/>
            <person name="De Baere E."/>
            <person name="Beysen D."/>
            <person name="Usha K."/>
            <person name="Sundaresan P."/>
            <person name="Veitia R.A."/>
        </authorList>
    </citation>
    <scope>VARIANT BPES ALA-ALA-ALA-ALA-ALA-234 INS</scope>
    <scope>CHARACTERIZATION OF VARIANT BPES ALA-ALA-ALA-ALA-ALA-234 INS</scope>
</reference>
<reference key="20">
    <citation type="journal article" date="2008" name="Hum. Mol. Genet.">
        <title>Missense mutations in the forkhead domain of FOXL2 lead to subcellular mislocalization, protein aggregation and impaired transactivation.</title>
        <authorList>
            <person name="Beysen D."/>
            <person name="Moumne L."/>
            <person name="Veitia R."/>
            <person name="Peters H."/>
            <person name="Leroy B.P."/>
            <person name="De Paepe A."/>
            <person name="De Baere E."/>
        </authorList>
    </citation>
    <scope>CHARACTERIZATION OF VARIANTS BPES LEU-58; VAL-66; LYS-69; THR-80; ASN-84; SER-90; GLY-98; ARG-101; THR-102; CYS-103; ARG-104; PHE-106; PRO-106; LYS-109 AND PHE-217</scope>
</reference>
<reference key="21">
    <citation type="journal article" date="2008" name="Hum. Mutat.">
        <title>Differential functional effects of novel mutations of the transcription factor FOXL2 in BPES patients.</title>
        <authorList>
            <person name="Nallathambi J."/>
            <person name="Laissue P."/>
            <person name="Batista F."/>
            <person name="Benayoun B.A."/>
            <person name="Lesaffre C."/>
            <person name="Moumne L."/>
            <person name="Pandaranayaka P.E."/>
            <person name="Usha K."/>
            <person name="Krishnaswamy S."/>
            <person name="Sundaresan P."/>
            <person name="Veitia R.A."/>
        </authorList>
    </citation>
    <scope>VARIANTS BPES ARG-98; PRO-108; CYS-215; CYS-217 AND ALA-ALA-ALA-ALA-ALA-ALA-ALA-ALA-ALA-ALA-234 INS</scope>
    <scope>VARIANT GLY-179</scope>
    <scope>CHARACTERIZATION OF VARIANTS BPES PRO-108 AND CYS-217</scope>
</reference>
<reference key="22">
    <citation type="journal article" date="2008" name="Hum. Mutat.">
        <title>Identification of 34 novel and 56 known FOXL2 mutations in patients with blepharophimosis syndrome.</title>
        <authorList>
            <person name="Beysen D."/>
            <person name="De Jaegere S."/>
            <person name="Amor D."/>
            <person name="Bouchard P."/>
            <person name="Christin-Maitre S."/>
            <person name="Fellous M."/>
            <person name="Touraine P."/>
            <person name="Grix A.W."/>
            <person name="Hennekam R."/>
            <person name="Meire F."/>
            <person name="Oyen N."/>
            <person name="Wilson L.C."/>
            <person name="Barel D."/>
            <person name="Clayton-Smith J."/>
            <person name="de Ravel T."/>
            <person name="Decock C."/>
            <person name="Delbeke P."/>
            <person name="Ensenauer R."/>
            <person name="Ebinger F."/>
            <person name="Gillessen-Kaesbach G."/>
            <person name="Hendriks Y."/>
            <person name="Kimonis V."/>
            <person name="Laframboise R."/>
            <person name="Laissue P."/>
            <person name="Leppig K."/>
            <person name="Leroy B.P."/>
            <person name="Miller D.T."/>
            <person name="Mowat D."/>
            <person name="Neumann L."/>
            <person name="Plomp A."/>
            <person name="Van Regemorter N."/>
            <person name="Wieczorek D."/>
            <person name="Veitia R.A."/>
            <person name="De Paepe A."/>
            <person name="De Baere E."/>
        </authorList>
    </citation>
    <scope>VARIANTS BPES LEU-58; VAL-65; VAL-66; LYS-69; THR-80; ASN-84; SER-90; GLY-98; ARG-101; THR-102; CYS-103 AND PRO-106</scope>
</reference>
<reference key="23">
    <citation type="journal article" date="2009" name="N. Engl. J. Med.">
        <title>Mutation of FOXL2 in granulosa-cell tumors of the ovary.</title>
        <authorList>
            <person name="Shah S.P."/>
            <person name="Kobel M."/>
            <person name="Senz J."/>
            <person name="Morin R.D."/>
            <person name="Clarke B.A."/>
            <person name="Wiegand K.C."/>
            <person name="Leung G."/>
            <person name="Zayed A."/>
            <person name="Mehl E."/>
            <person name="Kalloger S.E."/>
            <person name="Sun M."/>
            <person name="Giuliany R."/>
            <person name="Yorida E."/>
            <person name="Jones S."/>
            <person name="Varhol R."/>
            <person name="Swenerton K.D."/>
            <person name="Miller D."/>
            <person name="Clement P.B."/>
            <person name="Crane C."/>
            <person name="Madore J."/>
            <person name="Provencher D."/>
            <person name="Leung P."/>
            <person name="DeFazio A."/>
            <person name="Khattra J."/>
            <person name="Turashvili G."/>
            <person name="Zhao Y."/>
            <person name="Zeng T."/>
            <person name="Glover J.N."/>
            <person name="Vanderhyden B."/>
            <person name="Zhao C."/>
            <person name="Parkinson C.A."/>
            <person name="Jimenez-Linan M."/>
            <person name="Bowtell D.D."/>
            <person name="Mes-Masson A.M."/>
            <person name="Brenton J.D."/>
            <person name="Aparicio S.A."/>
            <person name="Boyd N."/>
            <person name="Hirst M."/>
            <person name="Gilks C.B."/>
            <person name="Marra M."/>
            <person name="Huntsman D.G."/>
        </authorList>
    </citation>
    <scope>VARIANT TRP-134</scope>
</reference>
<reference key="24">
    <citation type="journal article" date="2009" name="PLoS ONE">
        <title>The specificity of the FOXL2 c.402C&gt;G Somatic mutation: a survey of solid tumors.</title>
        <authorList>
            <person name="Schrader K.A."/>
            <person name="Gorbatcheva B."/>
            <person name="Senz J."/>
            <person name="Heravi-Moussavi A."/>
            <person name="Melnyk N."/>
            <person name="Salamanca C."/>
            <person name="Maines-Bandiera S."/>
            <person name="Cooke S.L."/>
            <person name="Leung P."/>
            <person name="Brenton J.D."/>
            <person name="Gilks C.B."/>
            <person name="Monahan J."/>
            <person name="Huntsman D.G."/>
        </authorList>
    </citation>
    <scope>VARIANT TRP-134</scope>
</reference>
<reference key="25">
    <citation type="journal article" date="2011" name="Arch. Ophthalmol.">
        <title>Insights into levator muscle dysfunction in a cohort of patients with molecularly confirmed blepharophimosis-ptosis-epicanthus inversus syndrome using high-resolution imaging, anatomic examination, and histopathologic examination.</title>
        <authorList>
            <person name="Decock C.E."/>
            <person name="De Baere E.E."/>
            <person name="Bauters W."/>
            <person name="Shah A.D."/>
            <person name="Delaey C."/>
            <person name="Forsyth R."/>
            <person name="Leroy B.P."/>
            <person name="Kestelyn P."/>
            <person name="Claerhout I."/>
        </authorList>
    </citation>
    <scope>VARIANT BPES ARG-193</scope>
</reference>
<reference key="26">
    <citation type="journal article" date="2017" name="Hum. Mutat.">
        <title>Identical NR5A1 missense mutations in two unrelated 46,XX individuals with testicular tissues.</title>
        <authorList>
            <person name="Igarashi M."/>
            <person name="Takasawa K."/>
            <person name="Hakoda A."/>
            <person name="Kanno J."/>
            <person name="Takada S."/>
            <person name="Miyado M."/>
            <person name="Baba T."/>
            <person name="Morohashi K.I."/>
            <person name="Tajima T."/>
            <person name="Hata K."/>
            <person name="Nakabayashi K."/>
            <person name="Matsubara Y."/>
            <person name="Sekido R."/>
            <person name="Ogata T."/>
            <person name="Kashimada K."/>
            <person name="Fukami M."/>
        </authorList>
    </citation>
    <scope>VARIANT GLY-349</scope>
</reference>
<gene>
    <name type="primary">FOXL2</name>
</gene>
<accession>P58012</accession>
<accession>Q4ZGJ3</accession>
<proteinExistence type="evidence at protein level"/>
<protein>
    <recommendedName>
        <fullName>Forkhead box protein L2</fullName>
    </recommendedName>
</protein>
<name>FOXL2_HUMAN</name>
<feature type="chain" id="PRO_0000091861" description="Forkhead box protein L2">
    <location>
        <begin position="1"/>
        <end position="376"/>
    </location>
</feature>
<feature type="DNA-binding region" description="Fork-head" evidence="2">
    <location>
        <begin position="54"/>
        <end position="148"/>
    </location>
</feature>
<feature type="region of interest" description="Disordered" evidence="3">
    <location>
        <begin position="1"/>
        <end position="53"/>
    </location>
</feature>
<feature type="region of interest" description="Disordered" evidence="3">
    <location>
        <begin position="276"/>
        <end position="342"/>
    </location>
</feature>
<feature type="compositionally biased region" description="Gly residues" evidence="3">
    <location>
        <begin position="35"/>
        <end position="44"/>
    </location>
</feature>
<feature type="compositionally biased region" description="Basic residues" evidence="3">
    <location>
        <begin position="290"/>
        <end position="300"/>
    </location>
</feature>
<feature type="compositionally biased region" description="Pro residues" evidence="3">
    <location>
        <begin position="304"/>
        <end position="321"/>
    </location>
</feature>
<feature type="modified residue" description="Phosphoserine" evidence="27">
    <location>
        <position position="33"/>
    </location>
</feature>
<feature type="cross-link" description="Glycyl lysine isopeptide (Lys-Gly) (interchain with G-Cter in SUMO)">
    <location>
        <position position="25"/>
    </location>
</feature>
<feature type="sequence variant" id="VAR_021196" description="In BPES; sporadic; nuclear and cytoplasmic aggregation; impaired transactivation activity." evidence="16 18">
    <original>S</original>
    <variation>L</variation>
    <location>
        <position position="58"/>
    </location>
</feature>
<feature type="sequence variant" id="VAR_062545" description="In BPES; dbSNP:rs1315073489." evidence="14">
    <original>I</original>
    <variation>T</variation>
    <location>
        <position position="63"/>
    </location>
</feature>
<feature type="sequence variant" id="VAR_046490" description="In BPES; dbSNP:rs1559922621." evidence="18">
    <original>M</original>
    <variation>V</variation>
    <location>
        <position position="65"/>
    </location>
</feature>
<feature type="sequence variant" id="VAR_021197" description="In BPES; nuclear and cytoplasmic aggregation; impaired transactivation activity." evidence="16 18">
    <original>A</original>
    <variation>V</variation>
    <location>
        <position position="66"/>
    </location>
</feature>
<feature type="sequence variant" id="VAR_021198" description="In BPES; sporadic; nuclear aggregation; normal transactivation activity; dbSNP:rs387906920." evidence="16 18">
    <original>E</original>
    <variation>K</variation>
    <location>
        <position position="69"/>
    </location>
</feature>
<feature type="sequence variant" id="VAR_046491" description="In BPES; nuclear and cytoplasmic aggregation; impaired transactivation activity." evidence="16 18">
    <original>I</original>
    <variation>T</variation>
    <location>
        <position position="80"/>
    </location>
</feature>
<feature type="sequence variant" id="VAR_046492" description="In BPES; nuclear and cytoplasmic aggregation; impaired transactivation activity." evidence="16 18">
    <original>I</original>
    <variation>N</variation>
    <location>
        <position position="84"/>
    </location>
</feature>
<feature type="sequence variant" id="VAR_016883" description="In BPES; type I; dbSNP:rs28937884." evidence="10">
    <original>I</original>
    <variation>S</variation>
    <location>
        <position position="84"/>
    </location>
</feature>
<feature type="sequence variant" id="VAR_016884" description="In BPES; sporadic." evidence="5">
    <location>
        <position position="85"/>
    </location>
</feature>
<feature type="sequence variant" id="VAR_046493" description="In BPES; nuclear and cytoplasmic aggregation; impaired transactivation activity." evidence="16 18">
    <original>F</original>
    <variation>S</variation>
    <location>
        <position position="90"/>
    </location>
</feature>
<feature type="sequence variant" id="VAR_046494" description="In BPES; nuclear and cytoplasmic aggregation; impaired transactivation activity." evidence="16 18">
    <original>W</original>
    <variation>G</variation>
    <location>
        <position position="98"/>
    </location>
</feature>
<feature type="sequence variant" id="VAR_062546" description="In BPES; dbSNP:rs1057516149." evidence="17">
    <original>W</original>
    <variation>R</variation>
    <location>
        <position position="98"/>
    </location>
</feature>
<feature type="sequence variant" id="VAR_046495" description="In BPES; nuclear aggregation; impaired transactivation activity; dbSNP:rs1057516151." evidence="16 18">
    <original>S</original>
    <variation>R</variation>
    <location>
        <position position="101"/>
    </location>
</feature>
<feature type="sequence variant" id="VAR_046496" description="In BPES; nuclear and cytoplasmic aggregation; impaired transactivation activity; dbSNP:rs2107744725." evidence="16 18">
    <original>I</original>
    <variation>T</variation>
    <location>
        <position position="102"/>
    </location>
</feature>
<feature type="sequence variant" id="VAR_046497" description="In BPES; nuclear and cytoplasmic aggregation; normal transactivation activity." evidence="16 18">
    <original>R</original>
    <variation>C</variation>
    <location>
        <position position="103"/>
    </location>
</feature>
<feature type="sequence variant" id="VAR_021199" description="In BPES; diffuse nuclear localization as wild type; normal transactivation activity; dbSNP:rs1057516153." evidence="11 16">
    <original>H</original>
    <variation>R</variation>
    <location>
        <position position="104"/>
    </location>
</feature>
<feature type="sequence variant" id="VAR_021200" description="In BPES; type II.">
    <original>N</original>
    <variation>S</variation>
    <location>
        <position position="105"/>
    </location>
</feature>
<feature type="sequence variant" id="VAR_016885" description="In BPES; sporadic; nuclear and cytoplasmic aggregation; impaired transactivation activity; dbSNP:rs1057516156." evidence="9 16">
    <original>L</original>
    <variation>F</variation>
    <location>
        <position position="106"/>
    </location>
</feature>
<feature type="sequence variant" id="VAR_046498" description="In BPES; nuclear and cytoplasmic aggregation; impaired transactivation activity; dbSNP:rs2107744697." evidence="16 18">
    <original>L</original>
    <variation>P</variation>
    <location>
        <position position="106"/>
    </location>
</feature>
<feature type="sequence variant" id="VAR_062547" description="In BPES; nuclear aggregation and cytoplasmic mislocalization; impaired transactivation activity; dbSNP:rs2107744687." evidence="17">
    <original>L</original>
    <variation>P</variation>
    <location>
        <position position="108"/>
    </location>
</feature>
<feature type="sequence variant" id="VAR_016886" description="In BPES; type II; diffuse nuclear localization as wild type; impaired transactivation activity; dbSNP:rs2107744671." evidence="9 16">
    <original>N</original>
    <variation>K</variation>
    <location>
        <position position="109"/>
    </location>
</feature>
<feature type="sequence variant" id="VAR_062548" description="In granulosa-cell tumors of the ovary; not commonly found in other tumor types; dbSNP:rs1057519865." evidence="21 23">
    <original>C</original>
    <variation>W</variation>
    <location>
        <position position="134"/>
    </location>
</feature>
<feature type="sequence variant" id="VAR_021201" description="In dbSNP:rs7432551." evidence="6 17">
    <original>A</original>
    <variation>G</variation>
    <location>
        <position position="179"/>
    </location>
</feature>
<feature type="sequence variant" id="VAR_015181" description="In POF3; does not affect nuclear localization; reduces transcriptional activation of OSR2; dbSNP:rs121908359." evidence="7 20">
    <original>G</original>
    <variation>D</variation>
    <location>
        <position position="187"/>
    </location>
</feature>
<feature type="sequence variant" id="VAR_021202" description="In BPES; type II; dbSNP:rs1057516162." evidence="24">
    <original>K</original>
    <variation>R</variation>
    <location>
        <position position="193"/>
    </location>
</feature>
<feature type="sequence variant" id="VAR_021203" description="In BPES; dbSNP:rs1057516168." evidence="12 17">
    <original>Y</original>
    <variation>C</variation>
    <location>
        <position position="215"/>
    </location>
</feature>
<feature type="sequence variant" id="VAR_062549" description="In BPES; diffuse nuclear localization; normal transcriptional activation." evidence="17">
    <original>S</original>
    <variation>C</variation>
    <location>
        <position position="217"/>
    </location>
</feature>
<feature type="sequence variant" id="VAR_016887" description="In BPES; diffuse nuclear localization; increased transactivation activity; dbSNP:rs797044527." evidence="5 9 16">
    <original>S</original>
    <variation>F</variation>
    <location>
        <position position="217"/>
    </location>
</feature>
<feature type="sequence variant" id="VAR_037303" description="In BPES; significant higher cytoplasmic retention compared to the wild-type protein." evidence="15">
    <original>A</original>
    <variation>AAAAAA</variation>
    <location>
        <position position="234"/>
    </location>
</feature>
<feature type="sequence variant" id="VAR_010782" description="In BPES; type II." evidence="4 8">
    <original>A</original>
    <variation>AAAAAAAAAAA</variation>
    <location>
        <position position="234"/>
    </location>
</feature>
<feature type="sequence variant" id="VAR_025306" description="In BPES." evidence="26">
    <original>A</original>
    <variation>AAAAAAAAAAAA</variation>
    <location>
        <position position="234"/>
    </location>
</feature>
<feature type="sequence variant" id="VAR_021204" description="In POF3; dbSNP:rs28937885." evidence="6">
    <original>Y</original>
    <variation>N</variation>
    <location>
        <position position="258"/>
    </location>
</feature>
<feature type="sequence variant" id="VAR_015182" evidence="7">
    <original>P</original>
    <variation>S</variation>
    <location>
        <position position="285"/>
    </location>
</feature>
<feature type="sequence variant" id="VAR_078138" description="In dbSNP:rs201840174." evidence="25">
    <original>R</original>
    <variation>G</variation>
    <location>
        <position position="349"/>
    </location>
</feature>
<feature type="mutagenesis site" description="Results in reduced sumoylation. Loss of transcriptional repression activity." evidence="22">
    <original>K</original>
    <variation>R</variation>
    <location>
        <position position="25"/>
    </location>
</feature>
<feature type="helix" evidence="28">
    <location>
        <begin position="59"/>
        <end position="69"/>
    </location>
</feature>
<feature type="strand" evidence="28">
    <location>
        <begin position="70"/>
        <end position="75"/>
    </location>
</feature>
<feature type="helix" evidence="28">
    <location>
        <begin position="77"/>
        <end position="87"/>
    </location>
</feature>
<feature type="helix" evidence="28">
    <location>
        <begin position="89"/>
        <end position="92"/>
    </location>
</feature>
<feature type="helix" evidence="28">
    <location>
        <begin position="95"/>
        <end position="108"/>
    </location>
</feature>
<feature type="strand" evidence="28">
    <location>
        <begin position="112"/>
        <end position="115"/>
    </location>
</feature>
<feature type="strand" evidence="28">
    <location>
        <begin position="127"/>
        <end position="130"/>
    </location>
</feature>
<feature type="helix" evidence="28">
    <location>
        <begin position="134"/>
        <end position="136"/>
    </location>
</feature>